<organism>
    <name type="scientific">Schizosaccharomyces pombe (strain 972 / ATCC 24843)</name>
    <name type="common">Fission yeast</name>
    <dbReference type="NCBI Taxonomy" id="284812"/>
    <lineage>
        <taxon>Eukaryota</taxon>
        <taxon>Fungi</taxon>
        <taxon>Dikarya</taxon>
        <taxon>Ascomycota</taxon>
        <taxon>Taphrinomycotina</taxon>
        <taxon>Schizosaccharomycetes</taxon>
        <taxon>Schizosaccharomycetales</taxon>
        <taxon>Schizosaccharomycetaceae</taxon>
        <taxon>Schizosaccharomyces</taxon>
    </lineage>
</organism>
<proteinExistence type="inferred from homology"/>
<sequence length="297" mass="33702">MASSRLLDWMSRMRSVPQLERLIPALYLAHGSPFLMLPQSSDDEVFSNDSKLGGLHYQFLEQLGPFLLEKFRPKGIIVFSAHYESRGSVEVYSRDDENPLFYDYYGFPDYLYQIKFHSKGSKRIADQIISALKEYQIPAKTVSGDRGLDHGVFVPFKIMFPDGLNIPLIEVSMHTLDPMQLYKVGQALQSLRKEYLIVSGGLNIHTFEDLSAFNEDTAADGYKEFQLDILKAIETDKQNDRLNKLLGLQLHPYFRKAHPREEHFVPLYVAAGLGSSGKSKVVCDLYGAVSAFFGIDE</sequence>
<accession>O74741</accession>
<feature type="chain" id="PRO_0000316041" description="4,5-DOPA dioxygenase extradiol-like protein">
    <location>
        <begin position="1"/>
        <end position="297"/>
    </location>
</feature>
<feature type="binding site" evidence="1">
    <location>
        <position position="30"/>
    </location>
    <ligand>
        <name>Zn(2+)</name>
        <dbReference type="ChEBI" id="CHEBI:29105"/>
    </ligand>
</feature>
<feature type="binding site" evidence="1">
    <location>
        <position position="82"/>
    </location>
    <ligand>
        <name>Zn(2+)</name>
        <dbReference type="ChEBI" id="CHEBI:29105"/>
    </ligand>
</feature>
<feature type="binding site" evidence="1">
    <location>
        <position position="205"/>
    </location>
    <ligand>
        <name>Zn(2+)</name>
        <dbReference type="ChEBI" id="CHEBI:29105"/>
    </ligand>
</feature>
<feature type="binding site" evidence="1">
    <location>
        <position position="263"/>
    </location>
    <ligand>
        <name>Zn(2+)</name>
        <dbReference type="ChEBI" id="CHEBI:29105"/>
    </ligand>
</feature>
<protein>
    <recommendedName>
        <fullName>4,5-DOPA dioxygenase extradiol-like protein</fullName>
        <ecNumber>1.13.-.-</ecNumber>
    </recommendedName>
</protein>
<comment type="function">
    <text>May be involved in the metabolism of aromatic compounds.</text>
</comment>
<comment type="cofactor">
    <cofactor evidence="1">
        <name>Zn(2+)</name>
        <dbReference type="ChEBI" id="CHEBI:29105"/>
    </cofactor>
    <text evidence="1">Binds 1 zinc ion per subunit.</text>
</comment>
<comment type="subcellular location">
    <subcellularLocation>
        <location evidence="2">Cytoplasm</location>
    </subcellularLocation>
    <subcellularLocation>
        <location evidence="2">Nucleus</location>
    </subcellularLocation>
</comment>
<comment type="similarity">
    <text evidence="3">Belongs to the DODA-type extradiol aromatic ring-opening dioxygenase family.</text>
</comment>
<dbReference type="EC" id="1.13.-.-"/>
<dbReference type="EMBL" id="CU329671">
    <property type="protein sequence ID" value="CAA21255.2"/>
    <property type="molecule type" value="Genomic_DNA"/>
</dbReference>
<dbReference type="PIR" id="T39644">
    <property type="entry name" value="T39644"/>
</dbReference>
<dbReference type="RefSeq" id="NP_595449.2">
    <property type="nucleotide sequence ID" value="NM_001021358.2"/>
</dbReference>
<dbReference type="SMR" id="O74741"/>
<dbReference type="BioGRID" id="276641">
    <property type="interactions" value="7"/>
</dbReference>
<dbReference type="FunCoup" id="O74741">
    <property type="interactions" value="329"/>
</dbReference>
<dbReference type="STRING" id="284812.O74741"/>
<dbReference type="iPTMnet" id="O74741"/>
<dbReference type="PaxDb" id="4896-SPBC1709.16c.1"/>
<dbReference type="EnsemblFungi" id="SPBC1709.16c.1">
    <property type="protein sequence ID" value="SPBC1709.16c.1:pep"/>
    <property type="gene ID" value="SPBC1709.16c"/>
</dbReference>
<dbReference type="KEGG" id="spo:2540104"/>
<dbReference type="PomBase" id="SPBC1709.16c"/>
<dbReference type="VEuPathDB" id="FungiDB:SPBC1709.16c"/>
<dbReference type="eggNOG" id="ENOG502QS66">
    <property type="taxonomic scope" value="Eukaryota"/>
</dbReference>
<dbReference type="HOGENOM" id="CLU_046582_1_1_1"/>
<dbReference type="InParanoid" id="O74741"/>
<dbReference type="OMA" id="SVIDGFW"/>
<dbReference type="PRO" id="PR:O74741"/>
<dbReference type="Proteomes" id="UP000002485">
    <property type="component" value="Chromosome II"/>
</dbReference>
<dbReference type="GO" id="GO:0005829">
    <property type="term" value="C:cytosol"/>
    <property type="evidence" value="ECO:0007005"/>
    <property type="project" value="PomBase"/>
</dbReference>
<dbReference type="GO" id="GO:0005634">
    <property type="term" value="C:nucleus"/>
    <property type="evidence" value="ECO:0007005"/>
    <property type="project" value="PomBase"/>
</dbReference>
<dbReference type="GO" id="GO:0008198">
    <property type="term" value="F:ferrous iron binding"/>
    <property type="evidence" value="ECO:0007669"/>
    <property type="project" value="InterPro"/>
</dbReference>
<dbReference type="GO" id="GO:0016702">
    <property type="term" value="F:oxidoreductase activity, acting on single donors with incorporation of molecular oxygen, incorporation of two atoms of oxygen"/>
    <property type="evidence" value="ECO:0007669"/>
    <property type="project" value="UniProtKB-ARBA"/>
</dbReference>
<dbReference type="GO" id="GO:0008270">
    <property type="term" value="F:zinc ion binding"/>
    <property type="evidence" value="ECO:0007669"/>
    <property type="project" value="InterPro"/>
</dbReference>
<dbReference type="CDD" id="cd07363">
    <property type="entry name" value="45_DOPA_Dioxygenase"/>
    <property type="match status" value="1"/>
</dbReference>
<dbReference type="Gene3D" id="3.40.830.10">
    <property type="entry name" value="LigB-like"/>
    <property type="match status" value="1"/>
</dbReference>
<dbReference type="InterPro" id="IPR014436">
    <property type="entry name" value="Extradiol_dOase_DODA"/>
</dbReference>
<dbReference type="InterPro" id="IPR004183">
    <property type="entry name" value="Xdiol_dOase_suB"/>
</dbReference>
<dbReference type="PANTHER" id="PTHR30096">
    <property type="entry name" value="4,5-DOPA DIOXYGENASE EXTRADIOL-LIKE PROTEIN"/>
    <property type="match status" value="1"/>
</dbReference>
<dbReference type="PANTHER" id="PTHR30096:SF0">
    <property type="entry name" value="4,5-DOPA DIOXYGENASE EXTRADIOL-LIKE PROTEIN"/>
    <property type="match status" value="1"/>
</dbReference>
<dbReference type="Pfam" id="PF02900">
    <property type="entry name" value="LigB"/>
    <property type="match status" value="1"/>
</dbReference>
<dbReference type="PIRSF" id="PIRSF006157">
    <property type="entry name" value="Doxgns_DODA"/>
    <property type="match status" value="1"/>
</dbReference>
<dbReference type="SUPFAM" id="SSF53213">
    <property type="entry name" value="LigB-like"/>
    <property type="match status" value="1"/>
</dbReference>
<evidence type="ECO:0000250" key="1"/>
<evidence type="ECO:0000269" key="2">
    <source>
    </source>
</evidence>
<evidence type="ECO:0000305" key="3"/>
<reference key="1">
    <citation type="journal article" date="2002" name="Nature">
        <title>The genome sequence of Schizosaccharomyces pombe.</title>
        <authorList>
            <person name="Wood V."/>
            <person name="Gwilliam R."/>
            <person name="Rajandream M.A."/>
            <person name="Lyne M.H."/>
            <person name="Lyne R."/>
            <person name="Stewart A."/>
            <person name="Sgouros J.G."/>
            <person name="Peat N."/>
            <person name="Hayles J."/>
            <person name="Baker S.G."/>
            <person name="Basham D."/>
            <person name="Bowman S."/>
            <person name="Brooks K."/>
            <person name="Brown D."/>
            <person name="Brown S."/>
            <person name="Chillingworth T."/>
            <person name="Churcher C.M."/>
            <person name="Collins M."/>
            <person name="Connor R."/>
            <person name="Cronin A."/>
            <person name="Davis P."/>
            <person name="Feltwell T."/>
            <person name="Fraser A."/>
            <person name="Gentles S."/>
            <person name="Goble A."/>
            <person name="Hamlin N."/>
            <person name="Harris D.E."/>
            <person name="Hidalgo J."/>
            <person name="Hodgson G."/>
            <person name="Holroyd S."/>
            <person name="Hornsby T."/>
            <person name="Howarth S."/>
            <person name="Huckle E.J."/>
            <person name="Hunt S."/>
            <person name="Jagels K."/>
            <person name="James K.D."/>
            <person name="Jones L."/>
            <person name="Jones M."/>
            <person name="Leather S."/>
            <person name="McDonald S."/>
            <person name="McLean J."/>
            <person name="Mooney P."/>
            <person name="Moule S."/>
            <person name="Mungall K.L."/>
            <person name="Murphy L.D."/>
            <person name="Niblett D."/>
            <person name="Odell C."/>
            <person name="Oliver K."/>
            <person name="O'Neil S."/>
            <person name="Pearson D."/>
            <person name="Quail M.A."/>
            <person name="Rabbinowitsch E."/>
            <person name="Rutherford K.M."/>
            <person name="Rutter S."/>
            <person name="Saunders D."/>
            <person name="Seeger K."/>
            <person name="Sharp S."/>
            <person name="Skelton J."/>
            <person name="Simmonds M.N."/>
            <person name="Squares R."/>
            <person name="Squares S."/>
            <person name="Stevens K."/>
            <person name="Taylor K."/>
            <person name="Taylor R.G."/>
            <person name="Tivey A."/>
            <person name="Walsh S.V."/>
            <person name="Warren T."/>
            <person name="Whitehead S."/>
            <person name="Woodward J.R."/>
            <person name="Volckaert G."/>
            <person name="Aert R."/>
            <person name="Robben J."/>
            <person name="Grymonprez B."/>
            <person name="Weltjens I."/>
            <person name="Vanstreels E."/>
            <person name="Rieger M."/>
            <person name="Schaefer M."/>
            <person name="Mueller-Auer S."/>
            <person name="Gabel C."/>
            <person name="Fuchs M."/>
            <person name="Duesterhoeft A."/>
            <person name="Fritzc C."/>
            <person name="Holzer E."/>
            <person name="Moestl D."/>
            <person name="Hilbert H."/>
            <person name="Borzym K."/>
            <person name="Langer I."/>
            <person name="Beck A."/>
            <person name="Lehrach H."/>
            <person name="Reinhardt R."/>
            <person name="Pohl T.M."/>
            <person name="Eger P."/>
            <person name="Zimmermann W."/>
            <person name="Wedler H."/>
            <person name="Wambutt R."/>
            <person name="Purnelle B."/>
            <person name="Goffeau A."/>
            <person name="Cadieu E."/>
            <person name="Dreano S."/>
            <person name="Gloux S."/>
            <person name="Lelaure V."/>
            <person name="Mottier S."/>
            <person name="Galibert F."/>
            <person name="Aves S.J."/>
            <person name="Xiang Z."/>
            <person name="Hunt C."/>
            <person name="Moore K."/>
            <person name="Hurst S.M."/>
            <person name="Lucas M."/>
            <person name="Rochet M."/>
            <person name="Gaillardin C."/>
            <person name="Tallada V.A."/>
            <person name="Garzon A."/>
            <person name="Thode G."/>
            <person name="Daga R.R."/>
            <person name="Cruzado L."/>
            <person name="Jimenez J."/>
            <person name="Sanchez M."/>
            <person name="del Rey F."/>
            <person name="Benito J."/>
            <person name="Dominguez A."/>
            <person name="Revuelta J.L."/>
            <person name="Moreno S."/>
            <person name="Armstrong J."/>
            <person name="Forsburg S.L."/>
            <person name="Cerutti L."/>
            <person name="Lowe T."/>
            <person name="McCombie W.R."/>
            <person name="Paulsen I."/>
            <person name="Potashkin J."/>
            <person name="Shpakovski G.V."/>
            <person name="Ussery D."/>
            <person name="Barrell B.G."/>
            <person name="Nurse P."/>
        </authorList>
    </citation>
    <scope>NUCLEOTIDE SEQUENCE [LARGE SCALE GENOMIC DNA]</scope>
    <source>
        <strain>972 / ATCC 24843</strain>
    </source>
</reference>
<reference key="2">
    <citation type="journal article" date="2011" name="Science">
        <title>Comparative functional genomics of the fission yeasts.</title>
        <authorList>
            <person name="Rhind N."/>
            <person name="Chen Z."/>
            <person name="Yassour M."/>
            <person name="Thompson D.A."/>
            <person name="Haas B.J."/>
            <person name="Habib N."/>
            <person name="Wapinski I."/>
            <person name="Roy S."/>
            <person name="Lin M.F."/>
            <person name="Heiman D.I."/>
            <person name="Young S.K."/>
            <person name="Furuya K."/>
            <person name="Guo Y."/>
            <person name="Pidoux A."/>
            <person name="Chen H.M."/>
            <person name="Robbertse B."/>
            <person name="Goldberg J.M."/>
            <person name="Aoki K."/>
            <person name="Bayne E.H."/>
            <person name="Berlin A.M."/>
            <person name="Desjardins C.A."/>
            <person name="Dobbs E."/>
            <person name="Dukaj L."/>
            <person name="Fan L."/>
            <person name="FitzGerald M.G."/>
            <person name="French C."/>
            <person name="Gujja S."/>
            <person name="Hansen K."/>
            <person name="Keifenheim D."/>
            <person name="Levin J.Z."/>
            <person name="Mosher R.A."/>
            <person name="Mueller C.A."/>
            <person name="Pfiffner J."/>
            <person name="Priest M."/>
            <person name="Russ C."/>
            <person name="Smialowska A."/>
            <person name="Swoboda P."/>
            <person name="Sykes S.M."/>
            <person name="Vaughn M."/>
            <person name="Vengrova S."/>
            <person name="Yoder R."/>
            <person name="Zeng Q."/>
            <person name="Allshire R."/>
            <person name="Baulcombe D."/>
            <person name="Birren B.W."/>
            <person name="Brown W."/>
            <person name="Ekwall K."/>
            <person name="Kellis M."/>
            <person name="Leatherwood J."/>
            <person name="Levin H."/>
            <person name="Margalit H."/>
            <person name="Martienssen R."/>
            <person name="Nieduszynski C.A."/>
            <person name="Spatafora J.W."/>
            <person name="Friedman N."/>
            <person name="Dalgaard J.Z."/>
            <person name="Baumann P."/>
            <person name="Niki H."/>
            <person name="Regev A."/>
            <person name="Nusbaum C."/>
        </authorList>
    </citation>
    <scope>REVISION OF GENE MODEL</scope>
</reference>
<reference key="3">
    <citation type="journal article" date="2006" name="Nat. Biotechnol.">
        <title>ORFeome cloning and global analysis of protein localization in the fission yeast Schizosaccharomyces pombe.</title>
        <authorList>
            <person name="Matsuyama A."/>
            <person name="Arai R."/>
            <person name="Yashiroda Y."/>
            <person name="Shirai A."/>
            <person name="Kamata A."/>
            <person name="Sekido S."/>
            <person name="Kobayashi Y."/>
            <person name="Hashimoto A."/>
            <person name="Hamamoto M."/>
            <person name="Hiraoka Y."/>
            <person name="Horinouchi S."/>
            <person name="Yoshida M."/>
        </authorList>
    </citation>
    <scope>SUBCELLULAR LOCATION [LARGE SCALE ANALYSIS]</scope>
</reference>
<gene>
    <name type="ORF">SPBC1709.16c</name>
</gene>
<name>DIOXL_SCHPO</name>
<keyword id="KW-0963">Cytoplasm</keyword>
<keyword id="KW-0479">Metal-binding</keyword>
<keyword id="KW-0539">Nucleus</keyword>
<keyword id="KW-0560">Oxidoreductase</keyword>
<keyword id="KW-1185">Reference proteome</keyword>
<keyword id="KW-0862">Zinc</keyword>